<evidence type="ECO:0000255" key="1">
    <source>
        <dbReference type="HAMAP-Rule" id="MF_01685"/>
    </source>
</evidence>
<accession>A6H064</accession>
<feature type="chain" id="PRO_0000364837" description="Ferredoxin--NADP reductase">
    <location>
        <begin position="1"/>
        <end position="351"/>
    </location>
</feature>
<feature type="binding site" evidence="1">
    <location>
        <position position="14"/>
    </location>
    <ligand>
        <name>FAD</name>
        <dbReference type="ChEBI" id="CHEBI:57692"/>
    </ligand>
</feature>
<feature type="binding site" evidence="1">
    <location>
        <position position="33"/>
    </location>
    <ligand>
        <name>FAD</name>
        <dbReference type="ChEBI" id="CHEBI:57692"/>
    </ligand>
</feature>
<feature type="binding site" evidence="1">
    <location>
        <position position="41"/>
    </location>
    <ligand>
        <name>FAD</name>
        <dbReference type="ChEBI" id="CHEBI:57692"/>
    </ligand>
</feature>
<feature type="binding site" evidence="1">
    <location>
        <position position="46"/>
    </location>
    <ligand>
        <name>FAD</name>
        <dbReference type="ChEBI" id="CHEBI:57692"/>
    </ligand>
</feature>
<feature type="binding site" evidence="1">
    <location>
        <position position="86"/>
    </location>
    <ligand>
        <name>FAD</name>
        <dbReference type="ChEBI" id="CHEBI:57692"/>
    </ligand>
</feature>
<feature type="binding site" evidence="1">
    <location>
        <position position="121"/>
    </location>
    <ligand>
        <name>FAD</name>
        <dbReference type="ChEBI" id="CHEBI:57692"/>
    </ligand>
</feature>
<feature type="binding site" evidence="1">
    <location>
        <position position="287"/>
    </location>
    <ligand>
        <name>FAD</name>
        <dbReference type="ChEBI" id="CHEBI:57692"/>
    </ligand>
</feature>
<feature type="binding site" evidence="1">
    <location>
        <position position="328"/>
    </location>
    <ligand>
        <name>FAD</name>
        <dbReference type="ChEBI" id="CHEBI:57692"/>
    </ligand>
</feature>
<name>FENR_FLAPJ</name>
<reference key="1">
    <citation type="journal article" date="2007" name="Nat. Biotechnol.">
        <title>Complete genome sequence of the fish pathogen Flavobacterium psychrophilum.</title>
        <authorList>
            <person name="Duchaud E."/>
            <person name="Boussaha M."/>
            <person name="Loux V."/>
            <person name="Bernardet J.-F."/>
            <person name="Michel C."/>
            <person name="Kerouault B."/>
            <person name="Mondot S."/>
            <person name="Nicolas P."/>
            <person name="Bossy R."/>
            <person name="Caron C."/>
            <person name="Bessieres P."/>
            <person name="Gibrat J.-F."/>
            <person name="Claverol S."/>
            <person name="Dumetz F."/>
            <person name="Le Henaff M."/>
            <person name="Benmansour A."/>
        </authorList>
    </citation>
    <scope>NUCLEOTIDE SEQUENCE [LARGE SCALE GENOMIC DNA]</scope>
    <source>
        <strain>ATCC 49511 / DSM 21280 / CIP 103535 / JIP02/86</strain>
    </source>
</reference>
<gene>
    <name type="ordered locus">FP1670</name>
</gene>
<protein>
    <recommendedName>
        <fullName evidence="1">Ferredoxin--NADP reductase</fullName>
        <shortName evidence="1">FNR</shortName>
        <shortName evidence="1">Fd-NADP(+) reductase</shortName>
        <ecNumber evidence="1">1.18.1.2</ecNumber>
    </recommendedName>
</protein>
<sequence>MIETDILIIGAGPTGLFTVFEAGLLKLKCHIIDGLPQPGGQLTELYPKKPIFDIPGYPSVLAGDLITNLIEQIKQFQPGFTLNETAETIEKLEDGTFIVTSNKGTKHHANSIAIAGGLGSFEPRKPILKDIEFYENDKGVEYFVKDPEKFRDKKVVISGGGDSALDWSIYLSNIASEVTLVHRRNEFRGALDSVEKVQELKSAGKIKLITPGEVVGFKGSEKIESVDIQVNTTLTTVPCDYFIPLFGLTPKLGAIANWGLEIEKNAIKVNNALDYQTNIEGIYAIGDVNTYPGKLKLILCGFHEATLMVQSVYQRINPGKKYVLKYTTVSGIDGFDGTRKEAEKQVVKSIE</sequence>
<comment type="catalytic activity">
    <reaction evidence="1">
        <text>2 reduced [2Fe-2S]-[ferredoxin] + NADP(+) + H(+) = 2 oxidized [2Fe-2S]-[ferredoxin] + NADPH</text>
        <dbReference type="Rhea" id="RHEA:20125"/>
        <dbReference type="Rhea" id="RHEA-COMP:10000"/>
        <dbReference type="Rhea" id="RHEA-COMP:10001"/>
        <dbReference type="ChEBI" id="CHEBI:15378"/>
        <dbReference type="ChEBI" id="CHEBI:33737"/>
        <dbReference type="ChEBI" id="CHEBI:33738"/>
        <dbReference type="ChEBI" id="CHEBI:57783"/>
        <dbReference type="ChEBI" id="CHEBI:58349"/>
        <dbReference type="EC" id="1.18.1.2"/>
    </reaction>
</comment>
<comment type="cofactor">
    <cofactor evidence="1">
        <name>FAD</name>
        <dbReference type="ChEBI" id="CHEBI:57692"/>
    </cofactor>
    <text evidence="1">Binds 1 FAD per subunit.</text>
</comment>
<comment type="subunit">
    <text evidence="1">Homodimer.</text>
</comment>
<comment type="similarity">
    <text evidence="1">Belongs to the ferredoxin--NADP reductase type 2 family.</text>
</comment>
<organism>
    <name type="scientific">Flavobacterium psychrophilum (strain ATCC 49511 / DSM 21280 / CIP 103535 / JIP02/86)</name>
    <dbReference type="NCBI Taxonomy" id="402612"/>
    <lineage>
        <taxon>Bacteria</taxon>
        <taxon>Pseudomonadati</taxon>
        <taxon>Bacteroidota</taxon>
        <taxon>Flavobacteriia</taxon>
        <taxon>Flavobacteriales</taxon>
        <taxon>Flavobacteriaceae</taxon>
        <taxon>Flavobacterium</taxon>
    </lineage>
</organism>
<dbReference type="EC" id="1.18.1.2" evidence="1"/>
<dbReference type="EMBL" id="AM398681">
    <property type="protein sequence ID" value="CAL43737.1"/>
    <property type="molecule type" value="Genomic_DNA"/>
</dbReference>
<dbReference type="RefSeq" id="WP_011963782.1">
    <property type="nucleotide sequence ID" value="NC_009613.3"/>
</dbReference>
<dbReference type="RefSeq" id="YP_001296546.1">
    <property type="nucleotide sequence ID" value="NC_009613.3"/>
</dbReference>
<dbReference type="SMR" id="A6H064"/>
<dbReference type="STRING" id="402612.FP1670"/>
<dbReference type="EnsemblBacteria" id="CAL43737">
    <property type="protein sequence ID" value="CAL43737"/>
    <property type="gene ID" value="FP1670"/>
</dbReference>
<dbReference type="KEGG" id="fps:FP1670"/>
<dbReference type="PATRIC" id="fig|402612.5.peg.1684"/>
<dbReference type="eggNOG" id="COG0492">
    <property type="taxonomic scope" value="Bacteria"/>
</dbReference>
<dbReference type="HOGENOM" id="CLU_031864_5_5_10"/>
<dbReference type="OrthoDB" id="9806179at2"/>
<dbReference type="Proteomes" id="UP000006394">
    <property type="component" value="Chromosome"/>
</dbReference>
<dbReference type="GO" id="GO:0004324">
    <property type="term" value="F:ferredoxin-NADP+ reductase activity"/>
    <property type="evidence" value="ECO:0007669"/>
    <property type="project" value="UniProtKB-UniRule"/>
</dbReference>
<dbReference type="GO" id="GO:0050660">
    <property type="term" value="F:flavin adenine dinucleotide binding"/>
    <property type="evidence" value="ECO:0007669"/>
    <property type="project" value="UniProtKB-UniRule"/>
</dbReference>
<dbReference type="GO" id="GO:0050661">
    <property type="term" value="F:NADP binding"/>
    <property type="evidence" value="ECO:0007669"/>
    <property type="project" value="UniProtKB-UniRule"/>
</dbReference>
<dbReference type="Gene3D" id="3.50.50.60">
    <property type="entry name" value="FAD/NAD(P)-binding domain"/>
    <property type="match status" value="2"/>
</dbReference>
<dbReference type="HAMAP" id="MF_01685">
    <property type="entry name" value="FENR2"/>
    <property type="match status" value="1"/>
</dbReference>
<dbReference type="InterPro" id="IPR036188">
    <property type="entry name" value="FAD/NAD-bd_sf"/>
</dbReference>
<dbReference type="InterPro" id="IPR023753">
    <property type="entry name" value="FAD/NAD-binding_dom"/>
</dbReference>
<dbReference type="InterPro" id="IPR022890">
    <property type="entry name" value="Fd--NADP_Rdtase_type_2"/>
</dbReference>
<dbReference type="InterPro" id="IPR050097">
    <property type="entry name" value="Ferredoxin-NADP_redctase_2"/>
</dbReference>
<dbReference type="PANTHER" id="PTHR48105">
    <property type="entry name" value="THIOREDOXIN REDUCTASE 1-RELATED-RELATED"/>
    <property type="match status" value="1"/>
</dbReference>
<dbReference type="Pfam" id="PF07992">
    <property type="entry name" value="Pyr_redox_2"/>
    <property type="match status" value="1"/>
</dbReference>
<dbReference type="PRINTS" id="PR00368">
    <property type="entry name" value="FADPNR"/>
</dbReference>
<dbReference type="PRINTS" id="PR00469">
    <property type="entry name" value="PNDRDTASEII"/>
</dbReference>
<dbReference type="SUPFAM" id="SSF51905">
    <property type="entry name" value="FAD/NAD(P)-binding domain"/>
    <property type="match status" value="1"/>
</dbReference>
<keyword id="KW-0274">FAD</keyword>
<keyword id="KW-0285">Flavoprotein</keyword>
<keyword id="KW-0521">NADP</keyword>
<keyword id="KW-0560">Oxidoreductase</keyword>
<keyword id="KW-1185">Reference proteome</keyword>
<proteinExistence type="inferred from homology"/>